<feature type="chain" id="PRO_0000234763" description="Tyrosine--tRNA ligase">
    <location>
        <begin position="1"/>
        <end position="424"/>
    </location>
</feature>
<feature type="domain" description="S4 RNA-binding" evidence="1">
    <location>
        <begin position="357"/>
        <end position="414"/>
    </location>
</feature>
<feature type="short sequence motif" description="'HIGH' region">
    <location>
        <begin position="42"/>
        <end position="51"/>
    </location>
</feature>
<feature type="short sequence motif" description="'KMSKS' region">
    <location>
        <begin position="235"/>
        <end position="239"/>
    </location>
</feature>
<feature type="binding site" evidence="1">
    <location>
        <position position="37"/>
    </location>
    <ligand>
        <name>L-tyrosine</name>
        <dbReference type="ChEBI" id="CHEBI:58315"/>
    </ligand>
</feature>
<feature type="binding site" evidence="1">
    <location>
        <position position="175"/>
    </location>
    <ligand>
        <name>L-tyrosine</name>
        <dbReference type="ChEBI" id="CHEBI:58315"/>
    </ligand>
</feature>
<feature type="binding site" evidence="1">
    <location>
        <position position="179"/>
    </location>
    <ligand>
        <name>L-tyrosine</name>
        <dbReference type="ChEBI" id="CHEBI:58315"/>
    </ligand>
</feature>
<feature type="binding site" evidence="1">
    <location>
        <position position="238"/>
    </location>
    <ligand>
        <name>ATP</name>
        <dbReference type="ChEBI" id="CHEBI:30616"/>
    </ligand>
</feature>
<comment type="function">
    <text evidence="1">Catalyzes the attachment of tyrosine to tRNA(Tyr) in a two-step reaction: tyrosine is first activated by ATP to form Tyr-AMP and then transferred to the acceptor end of tRNA(Tyr).</text>
</comment>
<comment type="catalytic activity">
    <reaction evidence="1">
        <text>tRNA(Tyr) + L-tyrosine + ATP = L-tyrosyl-tRNA(Tyr) + AMP + diphosphate + H(+)</text>
        <dbReference type="Rhea" id="RHEA:10220"/>
        <dbReference type="Rhea" id="RHEA-COMP:9706"/>
        <dbReference type="Rhea" id="RHEA-COMP:9707"/>
        <dbReference type="ChEBI" id="CHEBI:15378"/>
        <dbReference type="ChEBI" id="CHEBI:30616"/>
        <dbReference type="ChEBI" id="CHEBI:33019"/>
        <dbReference type="ChEBI" id="CHEBI:58315"/>
        <dbReference type="ChEBI" id="CHEBI:78442"/>
        <dbReference type="ChEBI" id="CHEBI:78536"/>
        <dbReference type="ChEBI" id="CHEBI:456215"/>
        <dbReference type="EC" id="6.1.1.1"/>
    </reaction>
</comment>
<comment type="subunit">
    <text evidence="1">Homodimer.</text>
</comment>
<comment type="subcellular location">
    <subcellularLocation>
        <location evidence="1">Cytoplasm</location>
    </subcellularLocation>
</comment>
<comment type="similarity">
    <text evidence="1">Belongs to the class-I aminoacyl-tRNA synthetase family. TyrS type 1 subfamily.</text>
</comment>
<organism>
    <name type="scientific">Salmonella paratyphi A (strain ATCC 9150 / SARB42)</name>
    <dbReference type="NCBI Taxonomy" id="295319"/>
    <lineage>
        <taxon>Bacteria</taxon>
        <taxon>Pseudomonadati</taxon>
        <taxon>Pseudomonadota</taxon>
        <taxon>Gammaproteobacteria</taxon>
        <taxon>Enterobacterales</taxon>
        <taxon>Enterobacteriaceae</taxon>
        <taxon>Salmonella</taxon>
    </lineage>
</organism>
<name>SYY_SALPA</name>
<proteinExistence type="inferred from homology"/>
<dbReference type="EC" id="6.1.1.1" evidence="1"/>
<dbReference type="EMBL" id="CP000026">
    <property type="protein sequence ID" value="AAV77345.1"/>
    <property type="molecule type" value="Genomic_DNA"/>
</dbReference>
<dbReference type="RefSeq" id="WP_000168626.1">
    <property type="nucleotide sequence ID" value="NC_006511.1"/>
</dbReference>
<dbReference type="SMR" id="Q5PIK7"/>
<dbReference type="KEGG" id="spt:SPA1404"/>
<dbReference type="HOGENOM" id="CLU_024003_0_3_6"/>
<dbReference type="Proteomes" id="UP000008185">
    <property type="component" value="Chromosome"/>
</dbReference>
<dbReference type="GO" id="GO:0005829">
    <property type="term" value="C:cytosol"/>
    <property type="evidence" value="ECO:0007669"/>
    <property type="project" value="TreeGrafter"/>
</dbReference>
<dbReference type="GO" id="GO:0005524">
    <property type="term" value="F:ATP binding"/>
    <property type="evidence" value="ECO:0007669"/>
    <property type="project" value="UniProtKB-UniRule"/>
</dbReference>
<dbReference type="GO" id="GO:0003723">
    <property type="term" value="F:RNA binding"/>
    <property type="evidence" value="ECO:0007669"/>
    <property type="project" value="UniProtKB-KW"/>
</dbReference>
<dbReference type="GO" id="GO:0004831">
    <property type="term" value="F:tyrosine-tRNA ligase activity"/>
    <property type="evidence" value="ECO:0007669"/>
    <property type="project" value="UniProtKB-UniRule"/>
</dbReference>
<dbReference type="GO" id="GO:0006437">
    <property type="term" value="P:tyrosyl-tRNA aminoacylation"/>
    <property type="evidence" value="ECO:0007669"/>
    <property type="project" value="UniProtKB-UniRule"/>
</dbReference>
<dbReference type="CDD" id="cd00165">
    <property type="entry name" value="S4"/>
    <property type="match status" value="1"/>
</dbReference>
<dbReference type="CDD" id="cd00805">
    <property type="entry name" value="TyrRS_core"/>
    <property type="match status" value="1"/>
</dbReference>
<dbReference type="FunFam" id="1.10.240.10:FF:000001">
    <property type="entry name" value="Tyrosine--tRNA ligase"/>
    <property type="match status" value="1"/>
</dbReference>
<dbReference type="FunFam" id="3.10.290.10:FF:000007">
    <property type="entry name" value="Tyrosine--tRNA ligase"/>
    <property type="match status" value="1"/>
</dbReference>
<dbReference type="FunFam" id="3.40.50.620:FF:000008">
    <property type="entry name" value="Tyrosine--tRNA ligase"/>
    <property type="match status" value="1"/>
</dbReference>
<dbReference type="Gene3D" id="3.40.50.620">
    <property type="entry name" value="HUPs"/>
    <property type="match status" value="1"/>
</dbReference>
<dbReference type="Gene3D" id="3.10.290.10">
    <property type="entry name" value="RNA-binding S4 domain"/>
    <property type="match status" value="1"/>
</dbReference>
<dbReference type="Gene3D" id="1.10.240.10">
    <property type="entry name" value="Tyrosyl-Transfer RNA Synthetase"/>
    <property type="match status" value="1"/>
</dbReference>
<dbReference type="HAMAP" id="MF_02006">
    <property type="entry name" value="Tyr_tRNA_synth_type1"/>
    <property type="match status" value="1"/>
</dbReference>
<dbReference type="InterPro" id="IPR001412">
    <property type="entry name" value="aa-tRNA-synth_I_CS"/>
</dbReference>
<dbReference type="InterPro" id="IPR002305">
    <property type="entry name" value="aa-tRNA-synth_Ic"/>
</dbReference>
<dbReference type="InterPro" id="IPR014729">
    <property type="entry name" value="Rossmann-like_a/b/a_fold"/>
</dbReference>
<dbReference type="InterPro" id="IPR002942">
    <property type="entry name" value="S4_RNA-bd"/>
</dbReference>
<dbReference type="InterPro" id="IPR036986">
    <property type="entry name" value="S4_RNA-bd_sf"/>
</dbReference>
<dbReference type="InterPro" id="IPR054608">
    <property type="entry name" value="SYY-like_C"/>
</dbReference>
<dbReference type="InterPro" id="IPR002307">
    <property type="entry name" value="Tyr-tRNA-ligase"/>
</dbReference>
<dbReference type="InterPro" id="IPR024088">
    <property type="entry name" value="Tyr-tRNA-ligase_bac-type"/>
</dbReference>
<dbReference type="InterPro" id="IPR024107">
    <property type="entry name" value="Tyr-tRNA-ligase_bac_1"/>
</dbReference>
<dbReference type="NCBIfam" id="TIGR00234">
    <property type="entry name" value="tyrS"/>
    <property type="match status" value="1"/>
</dbReference>
<dbReference type="PANTHER" id="PTHR11766:SF0">
    <property type="entry name" value="TYROSINE--TRNA LIGASE, MITOCHONDRIAL"/>
    <property type="match status" value="1"/>
</dbReference>
<dbReference type="PANTHER" id="PTHR11766">
    <property type="entry name" value="TYROSYL-TRNA SYNTHETASE"/>
    <property type="match status" value="1"/>
</dbReference>
<dbReference type="Pfam" id="PF22421">
    <property type="entry name" value="SYY_C-terminal"/>
    <property type="match status" value="1"/>
</dbReference>
<dbReference type="Pfam" id="PF00579">
    <property type="entry name" value="tRNA-synt_1b"/>
    <property type="match status" value="1"/>
</dbReference>
<dbReference type="PRINTS" id="PR01040">
    <property type="entry name" value="TRNASYNTHTYR"/>
</dbReference>
<dbReference type="SMART" id="SM00363">
    <property type="entry name" value="S4"/>
    <property type="match status" value="1"/>
</dbReference>
<dbReference type="SUPFAM" id="SSF55174">
    <property type="entry name" value="Alpha-L RNA-binding motif"/>
    <property type="match status" value="1"/>
</dbReference>
<dbReference type="SUPFAM" id="SSF52374">
    <property type="entry name" value="Nucleotidylyl transferase"/>
    <property type="match status" value="1"/>
</dbReference>
<dbReference type="PROSITE" id="PS00178">
    <property type="entry name" value="AA_TRNA_LIGASE_I"/>
    <property type="match status" value="1"/>
</dbReference>
<dbReference type="PROSITE" id="PS50889">
    <property type="entry name" value="S4"/>
    <property type="match status" value="1"/>
</dbReference>
<keyword id="KW-0030">Aminoacyl-tRNA synthetase</keyword>
<keyword id="KW-0067">ATP-binding</keyword>
<keyword id="KW-0963">Cytoplasm</keyword>
<keyword id="KW-0436">Ligase</keyword>
<keyword id="KW-0547">Nucleotide-binding</keyword>
<keyword id="KW-0648">Protein biosynthesis</keyword>
<keyword id="KW-0694">RNA-binding</keyword>
<sequence length="424" mass="47282">MASSNLIKQLQERGLVAQVTDEDALAERLAQGPIALYCGFDPTADSLHLGHLVPLLCLKRFQQAGHKPVALVGGATGLIGDPSFKAAERKLNTEETVQEWVAKIRKQVAPFLDFDCGENSAIAANNYDWFGSMNVLTFLRDIGKHFSVNQMINKEAVKQRLNRDDQGISFTEFSYNLLQGYDFACLNKLHGVALQIGGSDQWGNITSGIDLTRRLHQNQVFGLTVPLITKADGTKFGKTEGGAVWLDPKKTSPYKFYQFWINTADADVYRFLKFFTFMDIEEINALEEEDKNSGKAPRAQYVLAEQVTRLVHGEEGLVAAKRITECLFSGSLSALSEADFEQLAQDGVPMVEMEKGADLMQALVDAELQPSRGQARKTIASNAVTINGEKQSDPEYIFNDEDRLFGRYTLLRRGKKNYCLICWK</sequence>
<evidence type="ECO:0000255" key="1">
    <source>
        <dbReference type="HAMAP-Rule" id="MF_02006"/>
    </source>
</evidence>
<reference key="1">
    <citation type="journal article" date="2004" name="Nat. Genet.">
        <title>Comparison of genome degradation in Paratyphi A and Typhi, human-restricted serovars of Salmonella enterica that cause typhoid.</title>
        <authorList>
            <person name="McClelland M."/>
            <person name="Sanderson K.E."/>
            <person name="Clifton S.W."/>
            <person name="Latreille P."/>
            <person name="Porwollik S."/>
            <person name="Sabo A."/>
            <person name="Meyer R."/>
            <person name="Bieri T."/>
            <person name="Ozersky P."/>
            <person name="McLellan M."/>
            <person name="Harkins C.R."/>
            <person name="Wang C."/>
            <person name="Nguyen C."/>
            <person name="Berghoff A."/>
            <person name="Elliott G."/>
            <person name="Kohlberg S."/>
            <person name="Strong C."/>
            <person name="Du F."/>
            <person name="Carter J."/>
            <person name="Kremizki C."/>
            <person name="Layman D."/>
            <person name="Leonard S."/>
            <person name="Sun H."/>
            <person name="Fulton L."/>
            <person name="Nash W."/>
            <person name="Miner T."/>
            <person name="Minx P."/>
            <person name="Delehaunty K."/>
            <person name="Fronick C."/>
            <person name="Magrini V."/>
            <person name="Nhan M."/>
            <person name="Warren W."/>
            <person name="Florea L."/>
            <person name="Spieth J."/>
            <person name="Wilson R.K."/>
        </authorList>
    </citation>
    <scope>NUCLEOTIDE SEQUENCE [LARGE SCALE GENOMIC DNA]</scope>
    <source>
        <strain>ATCC 9150 / SARB42</strain>
    </source>
</reference>
<protein>
    <recommendedName>
        <fullName evidence="1">Tyrosine--tRNA ligase</fullName>
        <ecNumber evidence="1">6.1.1.1</ecNumber>
    </recommendedName>
    <alternativeName>
        <fullName evidence="1">Tyrosyl-tRNA synthetase</fullName>
        <shortName evidence="1">TyrRS</shortName>
    </alternativeName>
</protein>
<accession>Q5PIK7</accession>
<gene>
    <name evidence="1" type="primary">tyrS</name>
    <name type="ordered locus">SPA1404</name>
</gene>